<feature type="chain" id="PRO_0000340848" description="Tetraacyldisaccharide 4'-kinase">
    <location>
        <begin position="1"/>
        <end position="332"/>
    </location>
</feature>
<feature type="binding site" evidence="1">
    <location>
        <begin position="60"/>
        <end position="67"/>
    </location>
    <ligand>
        <name>ATP</name>
        <dbReference type="ChEBI" id="CHEBI:30616"/>
    </ligand>
</feature>
<reference key="1">
    <citation type="submission" date="2007-06" db="EMBL/GenBank/DDBJ databases">
        <authorList>
            <person name="Dodson R.J."/>
            <person name="Harkins D."/>
            <person name="Paulsen I.T."/>
        </authorList>
    </citation>
    <scope>NUCLEOTIDE SEQUENCE [LARGE SCALE GENOMIC DNA]</scope>
    <source>
        <strain>DSM 24068 / PA7</strain>
    </source>
</reference>
<keyword id="KW-0067">ATP-binding</keyword>
<keyword id="KW-0418">Kinase</keyword>
<keyword id="KW-0441">Lipid A biosynthesis</keyword>
<keyword id="KW-0444">Lipid biosynthesis</keyword>
<keyword id="KW-0443">Lipid metabolism</keyword>
<keyword id="KW-0547">Nucleotide-binding</keyword>
<keyword id="KW-0808">Transferase</keyword>
<gene>
    <name evidence="1" type="primary">lpxK</name>
    <name type="ordered locus">PSPA7_2180</name>
</gene>
<accession>A6V3B7</accession>
<dbReference type="EC" id="2.7.1.130" evidence="1"/>
<dbReference type="EMBL" id="CP000744">
    <property type="protein sequence ID" value="ABR82104.1"/>
    <property type="molecule type" value="Genomic_DNA"/>
</dbReference>
<dbReference type="RefSeq" id="WP_003157521.1">
    <property type="nucleotide sequence ID" value="NC_009656.1"/>
</dbReference>
<dbReference type="SMR" id="A6V3B7"/>
<dbReference type="KEGG" id="pap:PSPA7_2180"/>
<dbReference type="HOGENOM" id="CLU_038816_2_0_6"/>
<dbReference type="UniPathway" id="UPA00359">
    <property type="reaction ID" value="UER00482"/>
</dbReference>
<dbReference type="Proteomes" id="UP000001582">
    <property type="component" value="Chromosome"/>
</dbReference>
<dbReference type="GO" id="GO:0005886">
    <property type="term" value="C:plasma membrane"/>
    <property type="evidence" value="ECO:0007669"/>
    <property type="project" value="TreeGrafter"/>
</dbReference>
<dbReference type="GO" id="GO:0005524">
    <property type="term" value="F:ATP binding"/>
    <property type="evidence" value="ECO:0007669"/>
    <property type="project" value="UniProtKB-UniRule"/>
</dbReference>
<dbReference type="GO" id="GO:0009029">
    <property type="term" value="F:tetraacyldisaccharide 4'-kinase activity"/>
    <property type="evidence" value="ECO:0007669"/>
    <property type="project" value="UniProtKB-UniRule"/>
</dbReference>
<dbReference type="GO" id="GO:0009245">
    <property type="term" value="P:lipid A biosynthetic process"/>
    <property type="evidence" value="ECO:0007669"/>
    <property type="project" value="UniProtKB-UniRule"/>
</dbReference>
<dbReference type="GO" id="GO:0009244">
    <property type="term" value="P:lipopolysaccharide core region biosynthetic process"/>
    <property type="evidence" value="ECO:0007669"/>
    <property type="project" value="TreeGrafter"/>
</dbReference>
<dbReference type="HAMAP" id="MF_00409">
    <property type="entry name" value="LpxK"/>
    <property type="match status" value="1"/>
</dbReference>
<dbReference type="InterPro" id="IPR003758">
    <property type="entry name" value="LpxK"/>
</dbReference>
<dbReference type="InterPro" id="IPR027417">
    <property type="entry name" value="P-loop_NTPase"/>
</dbReference>
<dbReference type="NCBIfam" id="TIGR00682">
    <property type="entry name" value="lpxK"/>
    <property type="match status" value="1"/>
</dbReference>
<dbReference type="PANTHER" id="PTHR42724">
    <property type="entry name" value="TETRAACYLDISACCHARIDE 4'-KINASE"/>
    <property type="match status" value="1"/>
</dbReference>
<dbReference type="PANTHER" id="PTHR42724:SF1">
    <property type="entry name" value="TETRAACYLDISACCHARIDE 4'-KINASE, MITOCHONDRIAL-RELATED"/>
    <property type="match status" value="1"/>
</dbReference>
<dbReference type="Pfam" id="PF02606">
    <property type="entry name" value="LpxK"/>
    <property type="match status" value="1"/>
</dbReference>
<dbReference type="SUPFAM" id="SSF52540">
    <property type="entry name" value="P-loop containing nucleoside triphosphate hydrolases"/>
    <property type="match status" value="1"/>
</dbReference>
<name>LPXK_PSEP7</name>
<evidence type="ECO:0000255" key="1">
    <source>
        <dbReference type="HAMAP-Rule" id="MF_00409"/>
    </source>
</evidence>
<organism>
    <name type="scientific">Pseudomonas paraeruginosa (strain DSM 24068 / PA7)</name>
    <name type="common">Pseudomonas aeruginosa (strain PA7)</name>
    <dbReference type="NCBI Taxonomy" id="381754"/>
    <lineage>
        <taxon>Bacteria</taxon>
        <taxon>Pseudomonadati</taxon>
        <taxon>Pseudomonadota</taxon>
        <taxon>Gammaproteobacteria</taxon>
        <taxon>Pseudomonadales</taxon>
        <taxon>Pseudomonadaceae</taxon>
        <taxon>Pseudomonas</taxon>
        <taxon>Pseudomonas paraeruginosa</taxon>
    </lineage>
</organism>
<comment type="function">
    <text evidence="1">Transfers the gamma-phosphate of ATP to the 4'-position of a tetraacyldisaccharide 1-phosphate intermediate (termed DS-1-P) to form tetraacyldisaccharide 1,4'-bis-phosphate (lipid IVA).</text>
</comment>
<comment type="catalytic activity">
    <reaction evidence="1">
        <text>a lipid A disaccharide + ATP = a lipid IVA + ADP + H(+)</text>
        <dbReference type="Rhea" id="RHEA:67840"/>
        <dbReference type="ChEBI" id="CHEBI:15378"/>
        <dbReference type="ChEBI" id="CHEBI:30616"/>
        <dbReference type="ChEBI" id="CHEBI:176343"/>
        <dbReference type="ChEBI" id="CHEBI:176425"/>
        <dbReference type="ChEBI" id="CHEBI:456216"/>
        <dbReference type="EC" id="2.7.1.130"/>
    </reaction>
</comment>
<comment type="pathway">
    <text evidence="1">Glycolipid biosynthesis; lipid IV(A) biosynthesis; lipid IV(A) from (3R)-3-hydroxytetradecanoyl-[acyl-carrier-protein] and UDP-N-acetyl-alpha-D-glucosamine: step 6/6.</text>
</comment>
<comment type="similarity">
    <text evidence="1">Belongs to the LpxK family.</text>
</comment>
<proteinExistence type="inferred from homology"/>
<sequence>MSFSERLLAAWYRGHPALALLRPLEALYRRVVNARRADFLSGRKPAYRAPVPVVVVGNITVGGTGKTPMILWMVEHCRARGLRVGVISRGYGARPPHAPWRVRPEQDAAQAGDEPLMIVRRSGVPLMIDPDRPRALRALLAEEPLDLVLCDDGLQHYRLARDLELVLIDAARGLGNGRCLPAGPLREPRERLESVDALLYNGADEDPEDGFAFRLRPAALVNLQSGERRALGYFPAGQMLHAVAGIGNPQRFFGTLEALHWRPIPHAFPDHATYSATELTFDPPLPLLMTEKDAVKCRAFAAADWWYLAVDAVPSPAFVAWFDARLEHLLAR</sequence>
<protein>
    <recommendedName>
        <fullName evidence="1">Tetraacyldisaccharide 4'-kinase</fullName>
        <ecNumber evidence="1">2.7.1.130</ecNumber>
    </recommendedName>
    <alternativeName>
        <fullName evidence="1">Lipid A 4'-kinase</fullName>
    </alternativeName>
</protein>